<evidence type="ECO:0000250" key="1"/>
<evidence type="ECO:0000305" key="2"/>
<name>Y299_RICPR</name>
<dbReference type="EC" id="5.3.1.-"/>
<dbReference type="EMBL" id="AJ235271">
    <property type="protein sequence ID" value="CAA14760.1"/>
    <property type="molecule type" value="Genomic_DNA"/>
</dbReference>
<dbReference type="PIR" id="F71685">
    <property type="entry name" value="F71685"/>
</dbReference>
<dbReference type="RefSeq" id="NP_220683.1">
    <property type="nucleotide sequence ID" value="NC_000963.1"/>
</dbReference>
<dbReference type="SMR" id="Q9ZDM8"/>
<dbReference type="STRING" id="272947.gene:17555380"/>
<dbReference type="EnsemblBacteria" id="CAA14760">
    <property type="protein sequence ID" value="CAA14760"/>
    <property type="gene ID" value="CAA14760"/>
</dbReference>
<dbReference type="KEGG" id="rpr:RP299"/>
<dbReference type="PATRIC" id="fig|272947.5.peg.308"/>
<dbReference type="eggNOG" id="COG0698">
    <property type="taxonomic scope" value="Bacteria"/>
</dbReference>
<dbReference type="HOGENOM" id="CLU_091396_4_1_5"/>
<dbReference type="OrthoDB" id="1778624at2"/>
<dbReference type="Proteomes" id="UP000002480">
    <property type="component" value="Chromosome"/>
</dbReference>
<dbReference type="GO" id="GO:0004751">
    <property type="term" value="F:ribose-5-phosphate isomerase activity"/>
    <property type="evidence" value="ECO:0007669"/>
    <property type="project" value="TreeGrafter"/>
</dbReference>
<dbReference type="GO" id="GO:0019316">
    <property type="term" value="P:D-allose catabolic process"/>
    <property type="evidence" value="ECO:0007669"/>
    <property type="project" value="TreeGrafter"/>
</dbReference>
<dbReference type="GO" id="GO:0009052">
    <property type="term" value="P:pentose-phosphate shunt, non-oxidative branch"/>
    <property type="evidence" value="ECO:0007669"/>
    <property type="project" value="TreeGrafter"/>
</dbReference>
<dbReference type="Gene3D" id="3.40.1400.10">
    <property type="entry name" value="Sugar-phosphate isomerase, RpiB/LacA/LacB"/>
    <property type="match status" value="1"/>
</dbReference>
<dbReference type="InterPro" id="IPR004785">
    <property type="entry name" value="RpiB"/>
</dbReference>
<dbReference type="InterPro" id="IPR003500">
    <property type="entry name" value="RpiB_LacA_LacB"/>
</dbReference>
<dbReference type="InterPro" id="IPR036569">
    <property type="entry name" value="RpiB_LacA_LacB_sf"/>
</dbReference>
<dbReference type="NCBIfam" id="NF004051">
    <property type="entry name" value="PRK05571.1"/>
    <property type="match status" value="1"/>
</dbReference>
<dbReference type="NCBIfam" id="TIGR01120">
    <property type="entry name" value="rpiB"/>
    <property type="match status" value="1"/>
</dbReference>
<dbReference type="NCBIfam" id="TIGR00689">
    <property type="entry name" value="rpiB_lacA_lacB"/>
    <property type="match status" value="1"/>
</dbReference>
<dbReference type="PANTHER" id="PTHR30345:SF0">
    <property type="entry name" value="DNA DAMAGE-REPAIR_TOLERATION PROTEIN DRT102"/>
    <property type="match status" value="1"/>
</dbReference>
<dbReference type="PANTHER" id="PTHR30345">
    <property type="entry name" value="RIBOSE-5-PHOSPHATE ISOMERASE B"/>
    <property type="match status" value="1"/>
</dbReference>
<dbReference type="Pfam" id="PF02502">
    <property type="entry name" value="LacAB_rpiB"/>
    <property type="match status" value="1"/>
</dbReference>
<dbReference type="PIRSF" id="PIRSF005384">
    <property type="entry name" value="RpiB_LacA_B"/>
    <property type="match status" value="1"/>
</dbReference>
<dbReference type="SUPFAM" id="SSF89623">
    <property type="entry name" value="Ribose/Galactose isomerase RpiB/AlsB"/>
    <property type="match status" value="1"/>
</dbReference>
<reference key="1">
    <citation type="journal article" date="1998" name="Nature">
        <title>The genome sequence of Rickettsia prowazekii and the origin of mitochondria.</title>
        <authorList>
            <person name="Andersson S.G.E."/>
            <person name="Zomorodipour A."/>
            <person name="Andersson J.O."/>
            <person name="Sicheritz-Ponten T."/>
            <person name="Alsmark U.C.M."/>
            <person name="Podowski R.M."/>
            <person name="Naeslund A.K."/>
            <person name="Eriksson A.-S."/>
            <person name="Winkler H.H."/>
            <person name="Kurland C.G."/>
        </authorList>
    </citation>
    <scope>NUCLEOTIDE SEQUENCE [LARGE SCALE GENOMIC DNA]</scope>
    <source>
        <strain>Madrid E</strain>
    </source>
</reference>
<accession>Q9ZDM8</accession>
<feature type="chain" id="PRO_0000269488" description="Putative sugar phosphate isomerase RP299">
    <location>
        <begin position="1"/>
        <end position="144"/>
    </location>
</feature>
<feature type="active site" description="Proton donor" evidence="1">
    <location>
        <position position="101"/>
    </location>
</feature>
<feature type="binding site" evidence="1">
    <location>
        <position position="12"/>
    </location>
    <ligand>
        <name>substrate</name>
    </ligand>
</feature>
<feature type="binding site" evidence="1">
    <location>
        <position position="135"/>
    </location>
    <ligand>
        <name>substrate</name>
    </ligand>
</feature>
<sequence length="144" mass="15865">MKTYNIVIASDHSGYELKSKIINYLEQKCLNIYDCGTQDTQTVDYPDYAKKVVDIIIEKAAPIGILISDTGIGMSIAANRSSEIRAALCNDILTAENAKAHNDANILILGAKSVDNKIVFNIIDKFLTTKFEGGRHSTRLSKIK</sequence>
<gene>
    <name type="ordered locus">RP299</name>
</gene>
<organism>
    <name type="scientific">Rickettsia prowazekii (strain Madrid E)</name>
    <dbReference type="NCBI Taxonomy" id="272947"/>
    <lineage>
        <taxon>Bacteria</taxon>
        <taxon>Pseudomonadati</taxon>
        <taxon>Pseudomonadota</taxon>
        <taxon>Alphaproteobacteria</taxon>
        <taxon>Rickettsiales</taxon>
        <taxon>Rickettsiaceae</taxon>
        <taxon>Rickettsieae</taxon>
        <taxon>Rickettsia</taxon>
        <taxon>typhus group</taxon>
    </lineage>
</organism>
<comment type="similarity">
    <text evidence="2">Belongs to the LacAB/RpiB family.</text>
</comment>
<protein>
    <recommendedName>
        <fullName>Putative sugar phosphate isomerase RP299</fullName>
        <ecNumber>5.3.1.-</ecNumber>
    </recommendedName>
</protein>
<keyword id="KW-0413">Isomerase</keyword>
<keyword id="KW-1185">Reference proteome</keyword>
<proteinExistence type="inferred from homology"/>